<name>RL19_MYCTU</name>
<evidence type="ECO:0000250" key="1"/>
<evidence type="ECO:0000305" key="2"/>
<sequence length="113" mass="13013">MNRLDFVDKPSLRDDIPAFNPGDTINVHVKVIEGAKERLQVFKGVVIRRQGGGIRETFTVRKESYGVGVERTFPVHSPNIDHIEVVTRGDVRRAKLYYLRELRGKKAKIKEKR</sequence>
<comment type="function">
    <text evidence="1">This protein is located at the 30S-50S ribosomal subunit interface and may play a role in the structure and function of the aminoacyl-tRNA binding site.</text>
</comment>
<comment type="similarity">
    <text evidence="2">Belongs to the bacterial ribosomal protein bL19 family.</text>
</comment>
<gene>
    <name type="primary">rplS</name>
    <name type="ordered locus">Rv2904c</name>
    <name type="ORF">MTCY274.35c</name>
</gene>
<proteinExistence type="evidence at protein level"/>
<feature type="chain" id="PRO_0000163494" description="Large ribosomal subunit protein bL19">
    <location>
        <begin position="1"/>
        <end position="113"/>
    </location>
</feature>
<keyword id="KW-0002">3D-structure</keyword>
<keyword id="KW-1185">Reference proteome</keyword>
<keyword id="KW-0687">Ribonucleoprotein</keyword>
<keyword id="KW-0689">Ribosomal protein</keyword>
<dbReference type="EMBL" id="AL123456">
    <property type="protein sequence ID" value="CCP45706.1"/>
    <property type="molecule type" value="Genomic_DNA"/>
</dbReference>
<dbReference type="PIR" id="C70927">
    <property type="entry name" value="C70927"/>
</dbReference>
<dbReference type="RefSeq" id="NP_217420.1">
    <property type="nucleotide sequence ID" value="NC_000962.3"/>
</dbReference>
<dbReference type="RefSeq" id="WP_003414717.1">
    <property type="nucleotide sequence ID" value="NZ_NVQJ01000006.1"/>
</dbReference>
<dbReference type="PDB" id="5V7Q">
    <property type="method" value="EM"/>
    <property type="resolution" value="3.70 A"/>
    <property type="chains" value="P=1-113"/>
</dbReference>
<dbReference type="PDB" id="5V93">
    <property type="method" value="EM"/>
    <property type="resolution" value="4.00 A"/>
    <property type="chains" value="P=1-113"/>
</dbReference>
<dbReference type="PDB" id="7KGB">
    <property type="method" value="EM"/>
    <property type="resolution" value="2.70 A"/>
    <property type="chains" value="P=1-113"/>
</dbReference>
<dbReference type="PDB" id="7MSC">
    <property type="method" value="EM"/>
    <property type="resolution" value="2.97 A"/>
    <property type="chains" value="P=1-113"/>
</dbReference>
<dbReference type="PDB" id="7MSH">
    <property type="method" value="EM"/>
    <property type="resolution" value="3.23 A"/>
    <property type="chains" value="P=1-113"/>
</dbReference>
<dbReference type="PDB" id="7MSM">
    <property type="method" value="EM"/>
    <property type="resolution" value="2.79 A"/>
    <property type="chains" value="P=1-113"/>
</dbReference>
<dbReference type="PDB" id="7MSZ">
    <property type="method" value="EM"/>
    <property type="resolution" value="3.10 A"/>
    <property type="chains" value="P=1-113"/>
</dbReference>
<dbReference type="PDB" id="7MT2">
    <property type="method" value="EM"/>
    <property type="resolution" value="2.76 A"/>
    <property type="chains" value="P=1-113"/>
</dbReference>
<dbReference type="PDB" id="7MT3">
    <property type="method" value="EM"/>
    <property type="resolution" value="2.80 A"/>
    <property type="chains" value="P=1-113"/>
</dbReference>
<dbReference type="PDB" id="7MT7">
    <property type="method" value="EM"/>
    <property type="resolution" value="2.71 A"/>
    <property type="chains" value="P=1-113"/>
</dbReference>
<dbReference type="PDB" id="7SFR">
    <property type="method" value="EM"/>
    <property type="resolution" value="2.60 A"/>
    <property type="chains" value="P=1-113"/>
</dbReference>
<dbReference type="PDBsum" id="5V7Q"/>
<dbReference type="PDBsum" id="5V93"/>
<dbReference type="PDBsum" id="7KGB"/>
<dbReference type="PDBsum" id="7MSC"/>
<dbReference type="PDBsum" id="7MSH"/>
<dbReference type="PDBsum" id="7MSM"/>
<dbReference type="PDBsum" id="7MSZ"/>
<dbReference type="PDBsum" id="7MT2"/>
<dbReference type="PDBsum" id="7MT3"/>
<dbReference type="PDBsum" id="7MT7"/>
<dbReference type="PDBsum" id="7SFR"/>
<dbReference type="EMDB" id="EMD-22865"/>
<dbReference type="EMDB" id="EMD-23961"/>
<dbReference type="EMDB" id="EMD-23962"/>
<dbReference type="EMDB" id="EMD-23969"/>
<dbReference type="EMDB" id="EMD-23972"/>
<dbReference type="EMDB" id="EMD-23974"/>
<dbReference type="EMDB" id="EMD-23975"/>
<dbReference type="EMDB" id="EMD-23976"/>
<dbReference type="EMDB" id="EMD-8645"/>
<dbReference type="SMR" id="P9WHC9"/>
<dbReference type="FunCoup" id="P9WHC9">
    <property type="interactions" value="105"/>
</dbReference>
<dbReference type="STRING" id="83332.Rv2904c"/>
<dbReference type="PaxDb" id="83332-Rv2904c"/>
<dbReference type="DNASU" id="887356"/>
<dbReference type="GeneID" id="45426891"/>
<dbReference type="GeneID" id="887356"/>
<dbReference type="KEGG" id="mtu:Rv2904c"/>
<dbReference type="KEGG" id="mtv:RVBD_2904c"/>
<dbReference type="TubercuList" id="Rv2904c"/>
<dbReference type="eggNOG" id="COG0335">
    <property type="taxonomic scope" value="Bacteria"/>
</dbReference>
<dbReference type="InParanoid" id="P9WHC9"/>
<dbReference type="OrthoDB" id="9803541at2"/>
<dbReference type="PhylomeDB" id="P9WHC9"/>
<dbReference type="PRO" id="PR:P9WHC9"/>
<dbReference type="Proteomes" id="UP000001584">
    <property type="component" value="Chromosome"/>
</dbReference>
<dbReference type="GO" id="GO:0022625">
    <property type="term" value="C:cytosolic large ribosomal subunit"/>
    <property type="evidence" value="ECO:0000318"/>
    <property type="project" value="GO_Central"/>
</dbReference>
<dbReference type="GO" id="GO:0005886">
    <property type="term" value="C:plasma membrane"/>
    <property type="evidence" value="ECO:0007005"/>
    <property type="project" value="MTBBASE"/>
</dbReference>
<dbReference type="GO" id="GO:0003735">
    <property type="term" value="F:structural constituent of ribosome"/>
    <property type="evidence" value="ECO:0000318"/>
    <property type="project" value="GO_Central"/>
</dbReference>
<dbReference type="GO" id="GO:0006412">
    <property type="term" value="P:translation"/>
    <property type="evidence" value="ECO:0007669"/>
    <property type="project" value="UniProtKB-UniRule"/>
</dbReference>
<dbReference type="FunFam" id="2.30.30.790:FF:000001">
    <property type="entry name" value="50S ribosomal protein L19"/>
    <property type="match status" value="1"/>
</dbReference>
<dbReference type="Gene3D" id="2.30.30.790">
    <property type="match status" value="1"/>
</dbReference>
<dbReference type="HAMAP" id="MF_00402">
    <property type="entry name" value="Ribosomal_bL19"/>
    <property type="match status" value="1"/>
</dbReference>
<dbReference type="InterPro" id="IPR001857">
    <property type="entry name" value="Ribosomal_bL19"/>
</dbReference>
<dbReference type="InterPro" id="IPR018257">
    <property type="entry name" value="Ribosomal_bL19_CS"/>
</dbReference>
<dbReference type="InterPro" id="IPR038657">
    <property type="entry name" value="Ribosomal_bL19_sf"/>
</dbReference>
<dbReference type="InterPro" id="IPR008991">
    <property type="entry name" value="Translation_prot_SH3-like_sf"/>
</dbReference>
<dbReference type="NCBIfam" id="TIGR01024">
    <property type="entry name" value="rplS_bact"/>
    <property type="match status" value="1"/>
</dbReference>
<dbReference type="PANTHER" id="PTHR15680:SF9">
    <property type="entry name" value="LARGE RIBOSOMAL SUBUNIT PROTEIN BL19M"/>
    <property type="match status" value="1"/>
</dbReference>
<dbReference type="PANTHER" id="PTHR15680">
    <property type="entry name" value="RIBOSOMAL PROTEIN L19"/>
    <property type="match status" value="1"/>
</dbReference>
<dbReference type="Pfam" id="PF01245">
    <property type="entry name" value="Ribosomal_L19"/>
    <property type="match status" value="1"/>
</dbReference>
<dbReference type="PIRSF" id="PIRSF002191">
    <property type="entry name" value="Ribosomal_L19"/>
    <property type="match status" value="1"/>
</dbReference>
<dbReference type="PRINTS" id="PR00061">
    <property type="entry name" value="RIBOSOMALL19"/>
</dbReference>
<dbReference type="SUPFAM" id="SSF50104">
    <property type="entry name" value="Translation proteins SH3-like domain"/>
    <property type="match status" value="1"/>
</dbReference>
<dbReference type="PROSITE" id="PS01015">
    <property type="entry name" value="RIBOSOMAL_L19"/>
    <property type="match status" value="1"/>
</dbReference>
<protein>
    <recommendedName>
        <fullName evidence="2">Large ribosomal subunit protein bL19</fullName>
    </recommendedName>
    <alternativeName>
        <fullName>50S ribosomal protein L19</fullName>
    </alternativeName>
</protein>
<accession>P9WHC9</accession>
<accession>L0TB77</accession>
<accession>P66080</accession>
<accession>Q10792</accession>
<reference key="1">
    <citation type="journal article" date="1998" name="Nature">
        <title>Deciphering the biology of Mycobacterium tuberculosis from the complete genome sequence.</title>
        <authorList>
            <person name="Cole S.T."/>
            <person name="Brosch R."/>
            <person name="Parkhill J."/>
            <person name="Garnier T."/>
            <person name="Churcher C.M."/>
            <person name="Harris D.E."/>
            <person name="Gordon S.V."/>
            <person name="Eiglmeier K."/>
            <person name="Gas S."/>
            <person name="Barry C.E. III"/>
            <person name="Tekaia F."/>
            <person name="Badcock K."/>
            <person name="Basham D."/>
            <person name="Brown D."/>
            <person name="Chillingworth T."/>
            <person name="Connor R."/>
            <person name="Davies R.M."/>
            <person name="Devlin K."/>
            <person name="Feltwell T."/>
            <person name="Gentles S."/>
            <person name="Hamlin N."/>
            <person name="Holroyd S."/>
            <person name="Hornsby T."/>
            <person name="Jagels K."/>
            <person name="Krogh A."/>
            <person name="McLean J."/>
            <person name="Moule S."/>
            <person name="Murphy L.D."/>
            <person name="Oliver S."/>
            <person name="Osborne J."/>
            <person name="Quail M.A."/>
            <person name="Rajandream M.A."/>
            <person name="Rogers J."/>
            <person name="Rutter S."/>
            <person name="Seeger K."/>
            <person name="Skelton S."/>
            <person name="Squares S."/>
            <person name="Squares R."/>
            <person name="Sulston J.E."/>
            <person name="Taylor K."/>
            <person name="Whitehead S."/>
            <person name="Barrell B.G."/>
        </authorList>
    </citation>
    <scope>NUCLEOTIDE SEQUENCE [LARGE SCALE GENOMIC DNA]</scope>
    <source>
        <strain>ATCC 25618 / H37Rv</strain>
    </source>
</reference>
<reference key="2">
    <citation type="journal article" date="2011" name="Mol. Cell. Proteomics">
        <title>Proteogenomic analysis of Mycobacterium tuberculosis by high resolution mass spectrometry.</title>
        <authorList>
            <person name="Kelkar D.S."/>
            <person name="Kumar D."/>
            <person name="Kumar P."/>
            <person name="Balakrishnan L."/>
            <person name="Muthusamy B."/>
            <person name="Yadav A.K."/>
            <person name="Shrivastava P."/>
            <person name="Marimuthu A."/>
            <person name="Anand S."/>
            <person name="Sundaram H."/>
            <person name="Kingsbury R."/>
            <person name="Harsha H.C."/>
            <person name="Nair B."/>
            <person name="Prasad T.S."/>
            <person name="Chauhan D.S."/>
            <person name="Katoch K."/>
            <person name="Katoch V.M."/>
            <person name="Kumar P."/>
            <person name="Chaerkady R."/>
            <person name="Ramachandran S."/>
            <person name="Dash D."/>
            <person name="Pandey A."/>
        </authorList>
    </citation>
    <scope>IDENTIFICATION BY MASS SPECTROMETRY [LARGE SCALE ANALYSIS]</scope>
    <source>
        <strain>ATCC 25618 / H37Rv</strain>
    </source>
</reference>
<organism>
    <name type="scientific">Mycobacterium tuberculosis (strain ATCC 25618 / H37Rv)</name>
    <dbReference type="NCBI Taxonomy" id="83332"/>
    <lineage>
        <taxon>Bacteria</taxon>
        <taxon>Bacillati</taxon>
        <taxon>Actinomycetota</taxon>
        <taxon>Actinomycetes</taxon>
        <taxon>Mycobacteriales</taxon>
        <taxon>Mycobacteriaceae</taxon>
        <taxon>Mycobacterium</taxon>
        <taxon>Mycobacterium tuberculosis complex</taxon>
    </lineage>
</organism>